<sequence length="422" mass="47653">MDKLSQLPEALLVRILSLLSAKDVVSTMVLSKRWQFLWMLVPKLIYDDSYQAIEYGSFSRFVDRSFTLHDAQVLDTLHFKLGKTSCGTGDIRVWIKTAEKSCLRELIIEIDKSNSDNSSVVLPRSLYTCCRMLVTLKLNNAVLVDATSSFSFPSLKTLSLVSMKFPGDELIKMLLSNCPVLEDLVVKRCPYDNVTTFTVRVSSLKCLVLHETELASINADCGFVIDTPSLECLDIEDGRGGFCVIENNMTKVVKANVCNSYVHTQQLMGSISSVKRLYVCIPSSKDAYPVGSVFHCLVRLTICTCETEWLNLLMCVLRDSPKLRELKLVKNHVYRSHQPRPCWNEPSAVPECLLTSLETLEWVKYEGTEEEKEVAAFILRSGSCLKKVTISSKSTDINKKFEMLKELSLLFRRSPTCQIAFD</sequence>
<name>FBD39_ARATH</name>
<protein>
    <recommendedName>
        <fullName>Probable FBD-associated F-box protein At1g32375</fullName>
    </recommendedName>
</protein>
<dbReference type="EMBL" id="AC007767">
    <property type="protein sequence ID" value="AAF81334.1"/>
    <property type="status" value="ALT_SEQ"/>
    <property type="molecule type" value="Genomic_DNA"/>
</dbReference>
<dbReference type="EMBL" id="CP002684">
    <property type="protein sequence ID" value="AEE31474.1"/>
    <property type="molecule type" value="Genomic_DNA"/>
</dbReference>
<dbReference type="EMBL" id="CP002684">
    <property type="protein sequence ID" value="ANM58515.1"/>
    <property type="molecule type" value="Genomic_DNA"/>
</dbReference>
<dbReference type="PIR" id="F86448">
    <property type="entry name" value="F86448"/>
</dbReference>
<dbReference type="RefSeq" id="NP_001319128.1">
    <property type="nucleotide sequence ID" value="NM_001333006.1"/>
</dbReference>
<dbReference type="RefSeq" id="NP_564398.1">
    <property type="nucleotide sequence ID" value="NM_102971.2"/>
</dbReference>
<dbReference type="FunCoup" id="Q9LQM1">
    <property type="interactions" value="2"/>
</dbReference>
<dbReference type="PaxDb" id="3702-AT1G32375.1"/>
<dbReference type="ProteomicsDB" id="230661"/>
<dbReference type="EnsemblPlants" id="AT1G32375.1">
    <property type="protein sequence ID" value="AT1G32375.1"/>
    <property type="gene ID" value="AT1G32375"/>
</dbReference>
<dbReference type="EnsemblPlants" id="AT1G32375.2">
    <property type="protein sequence ID" value="AT1G32375.2"/>
    <property type="gene ID" value="AT1G32375"/>
</dbReference>
<dbReference type="GeneID" id="840130"/>
<dbReference type="Gramene" id="AT1G32375.1">
    <property type="protein sequence ID" value="AT1G32375.1"/>
    <property type="gene ID" value="AT1G32375"/>
</dbReference>
<dbReference type="Gramene" id="AT1G32375.2">
    <property type="protein sequence ID" value="AT1G32375.2"/>
    <property type="gene ID" value="AT1G32375"/>
</dbReference>
<dbReference type="KEGG" id="ath:AT1G32375"/>
<dbReference type="Araport" id="AT1G32375"/>
<dbReference type="TAIR" id="AT1G32375"/>
<dbReference type="eggNOG" id="ENOG502SVNQ">
    <property type="taxonomic scope" value="Eukaryota"/>
</dbReference>
<dbReference type="HOGENOM" id="CLU_010721_1_2_1"/>
<dbReference type="InParanoid" id="Q9LQM1"/>
<dbReference type="OMA" id="KCHEIEG"/>
<dbReference type="PRO" id="PR:Q9LQM1"/>
<dbReference type="Proteomes" id="UP000006548">
    <property type="component" value="Chromosome 1"/>
</dbReference>
<dbReference type="ExpressionAtlas" id="Q9LQM1">
    <property type="expression patterns" value="baseline and differential"/>
</dbReference>
<dbReference type="CDD" id="cd22160">
    <property type="entry name" value="F-box_AtFBL13-like"/>
    <property type="match status" value="1"/>
</dbReference>
<dbReference type="Gene3D" id="1.20.1280.50">
    <property type="match status" value="1"/>
</dbReference>
<dbReference type="Gene3D" id="3.80.10.10">
    <property type="entry name" value="Ribonuclease Inhibitor"/>
    <property type="match status" value="1"/>
</dbReference>
<dbReference type="InterPro" id="IPR036047">
    <property type="entry name" value="F-box-like_dom_sf"/>
</dbReference>
<dbReference type="InterPro" id="IPR053781">
    <property type="entry name" value="F-box_AtFBL13-like"/>
</dbReference>
<dbReference type="InterPro" id="IPR001810">
    <property type="entry name" value="F-box_dom"/>
</dbReference>
<dbReference type="InterPro" id="IPR006566">
    <property type="entry name" value="FBD"/>
</dbReference>
<dbReference type="InterPro" id="IPR050232">
    <property type="entry name" value="FBL13/AtMIF1-like"/>
</dbReference>
<dbReference type="InterPro" id="IPR032675">
    <property type="entry name" value="LRR_dom_sf"/>
</dbReference>
<dbReference type="InterPro" id="IPR055411">
    <property type="entry name" value="LRR_FXL15/At3g58940/PEG3-like"/>
</dbReference>
<dbReference type="PANTHER" id="PTHR31900">
    <property type="entry name" value="F-BOX/RNI SUPERFAMILY PROTEIN-RELATED"/>
    <property type="match status" value="1"/>
</dbReference>
<dbReference type="PANTHER" id="PTHR31900:SF29">
    <property type="entry name" value="FBD-LIKE DOMAIN FAMILY PROTEIN"/>
    <property type="match status" value="1"/>
</dbReference>
<dbReference type="Pfam" id="PF00646">
    <property type="entry name" value="F-box"/>
    <property type="match status" value="1"/>
</dbReference>
<dbReference type="Pfam" id="PF08387">
    <property type="entry name" value="FBD"/>
    <property type="match status" value="1"/>
</dbReference>
<dbReference type="Pfam" id="PF24758">
    <property type="entry name" value="LRR_At5g56370"/>
    <property type="match status" value="1"/>
</dbReference>
<dbReference type="SMART" id="SM00579">
    <property type="entry name" value="FBD"/>
    <property type="match status" value="1"/>
</dbReference>
<dbReference type="SUPFAM" id="SSF81383">
    <property type="entry name" value="F-box domain"/>
    <property type="match status" value="1"/>
</dbReference>
<dbReference type="SUPFAM" id="SSF52058">
    <property type="entry name" value="L domain-like"/>
    <property type="match status" value="1"/>
</dbReference>
<dbReference type="PROSITE" id="PS50181">
    <property type="entry name" value="FBOX"/>
    <property type="match status" value="1"/>
</dbReference>
<keyword id="KW-1185">Reference proteome</keyword>
<feature type="chain" id="PRO_0000396026" description="Probable FBD-associated F-box protein At1g32375">
    <location>
        <begin position="1"/>
        <end position="422"/>
    </location>
</feature>
<feature type="domain" description="F-box" evidence="1">
    <location>
        <begin position="1"/>
        <end position="53"/>
    </location>
</feature>
<feature type="domain" description="FBD">
    <location>
        <begin position="342"/>
        <end position="392"/>
    </location>
</feature>
<proteinExistence type="predicted"/>
<gene>
    <name type="ordered locus">At1g32375</name>
    <name type="ORF">F5D14.14</name>
</gene>
<comment type="sequence caution" evidence="2">
    <conflict type="erroneous gene model prediction">
        <sequence resource="EMBL-CDS" id="AAF81334"/>
    </conflict>
</comment>
<evidence type="ECO:0000255" key="1">
    <source>
        <dbReference type="PROSITE-ProRule" id="PRU00080"/>
    </source>
</evidence>
<evidence type="ECO:0000305" key="2"/>
<reference key="1">
    <citation type="journal article" date="2000" name="Nature">
        <title>Sequence and analysis of chromosome 1 of the plant Arabidopsis thaliana.</title>
        <authorList>
            <person name="Theologis A."/>
            <person name="Ecker J.R."/>
            <person name="Palm C.J."/>
            <person name="Federspiel N.A."/>
            <person name="Kaul S."/>
            <person name="White O."/>
            <person name="Alonso J."/>
            <person name="Altafi H."/>
            <person name="Araujo R."/>
            <person name="Bowman C.L."/>
            <person name="Brooks S.Y."/>
            <person name="Buehler E."/>
            <person name="Chan A."/>
            <person name="Chao Q."/>
            <person name="Chen H."/>
            <person name="Cheuk R.F."/>
            <person name="Chin C.W."/>
            <person name="Chung M.K."/>
            <person name="Conn L."/>
            <person name="Conway A.B."/>
            <person name="Conway A.R."/>
            <person name="Creasy T.H."/>
            <person name="Dewar K."/>
            <person name="Dunn P."/>
            <person name="Etgu P."/>
            <person name="Feldblyum T.V."/>
            <person name="Feng J.-D."/>
            <person name="Fong B."/>
            <person name="Fujii C.Y."/>
            <person name="Gill J.E."/>
            <person name="Goldsmith A.D."/>
            <person name="Haas B."/>
            <person name="Hansen N.F."/>
            <person name="Hughes B."/>
            <person name="Huizar L."/>
            <person name="Hunter J.L."/>
            <person name="Jenkins J."/>
            <person name="Johnson-Hopson C."/>
            <person name="Khan S."/>
            <person name="Khaykin E."/>
            <person name="Kim C.J."/>
            <person name="Koo H.L."/>
            <person name="Kremenetskaia I."/>
            <person name="Kurtz D.B."/>
            <person name="Kwan A."/>
            <person name="Lam B."/>
            <person name="Langin-Hooper S."/>
            <person name="Lee A."/>
            <person name="Lee J.M."/>
            <person name="Lenz C.A."/>
            <person name="Li J.H."/>
            <person name="Li Y.-P."/>
            <person name="Lin X."/>
            <person name="Liu S.X."/>
            <person name="Liu Z.A."/>
            <person name="Luros J.S."/>
            <person name="Maiti R."/>
            <person name="Marziali A."/>
            <person name="Militscher J."/>
            <person name="Miranda M."/>
            <person name="Nguyen M."/>
            <person name="Nierman W.C."/>
            <person name="Osborne B.I."/>
            <person name="Pai G."/>
            <person name="Peterson J."/>
            <person name="Pham P.K."/>
            <person name="Rizzo M."/>
            <person name="Rooney T."/>
            <person name="Rowley D."/>
            <person name="Sakano H."/>
            <person name="Salzberg S.L."/>
            <person name="Schwartz J.R."/>
            <person name="Shinn P."/>
            <person name="Southwick A.M."/>
            <person name="Sun H."/>
            <person name="Tallon L.J."/>
            <person name="Tambunga G."/>
            <person name="Toriumi M.J."/>
            <person name="Town C.D."/>
            <person name="Utterback T."/>
            <person name="Van Aken S."/>
            <person name="Vaysberg M."/>
            <person name="Vysotskaia V.S."/>
            <person name="Walker M."/>
            <person name="Wu D."/>
            <person name="Yu G."/>
            <person name="Fraser C.M."/>
            <person name="Venter J.C."/>
            <person name="Davis R.W."/>
        </authorList>
    </citation>
    <scope>NUCLEOTIDE SEQUENCE [LARGE SCALE GENOMIC DNA]</scope>
    <source>
        <strain>cv. Columbia</strain>
    </source>
</reference>
<reference key="2">
    <citation type="journal article" date="2017" name="Plant J.">
        <title>Araport11: a complete reannotation of the Arabidopsis thaliana reference genome.</title>
        <authorList>
            <person name="Cheng C.Y."/>
            <person name="Krishnakumar V."/>
            <person name="Chan A.P."/>
            <person name="Thibaud-Nissen F."/>
            <person name="Schobel S."/>
            <person name="Town C.D."/>
        </authorList>
    </citation>
    <scope>GENOME REANNOTATION</scope>
    <source>
        <strain>cv. Columbia</strain>
    </source>
</reference>
<organism>
    <name type="scientific">Arabidopsis thaliana</name>
    <name type="common">Mouse-ear cress</name>
    <dbReference type="NCBI Taxonomy" id="3702"/>
    <lineage>
        <taxon>Eukaryota</taxon>
        <taxon>Viridiplantae</taxon>
        <taxon>Streptophyta</taxon>
        <taxon>Embryophyta</taxon>
        <taxon>Tracheophyta</taxon>
        <taxon>Spermatophyta</taxon>
        <taxon>Magnoliopsida</taxon>
        <taxon>eudicotyledons</taxon>
        <taxon>Gunneridae</taxon>
        <taxon>Pentapetalae</taxon>
        <taxon>rosids</taxon>
        <taxon>malvids</taxon>
        <taxon>Brassicales</taxon>
        <taxon>Brassicaceae</taxon>
        <taxon>Camelineae</taxon>
        <taxon>Arabidopsis</taxon>
    </lineage>
</organism>
<accession>Q9LQM1</accession>